<gene>
    <name type="primary">Rgs9</name>
</gene>
<reference key="1">
    <citation type="journal article" date="1998" name="Neuron">
        <title>RGS9, a GTPase accelerator for phototransduction.</title>
        <authorList>
            <person name="He W."/>
            <person name="Cowan C.W."/>
            <person name="Wensel T.G."/>
        </authorList>
    </citation>
    <scope>NUCLEOTIDE SEQUENCE [MRNA] (ISOFORM 1)</scope>
</reference>
<reference key="2">
    <citation type="journal article" date="1999" name="J. Neurosci.">
        <title>Cloning and characterization of RGS9-2: a striatal-enriched alternatively spliced product of the RGS9 gene.</title>
        <authorList>
            <person name="Rahman Z."/>
            <person name="Gold S.J."/>
            <person name="Potenza M.N."/>
            <person name="Cowan C.W."/>
            <person name="Ni Y.G."/>
            <person name="He W."/>
            <person name="Wensel T.G."/>
            <person name="Nestler E.J."/>
        </authorList>
    </citation>
    <scope>NUCLEOTIDE SEQUENCE [MRNA] (ISOFORM 2)</scope>
    <source>
        <strain>C57BL/6J</strain>
        <tissue>Forebrain</tissue>
    </source>
</reference>
<reference key="3">
    <citation type="journal article" date="2009" name="PLoS Biol.">
        <title>Lineage-specific biology revealed by a finished genome assembly of the mouse.</title>
        <authorList>
            <person name="Church D.M."/>
            <person name="Goodstadt L."/>
            <person name="Hillier L.W."/>
            <person name="Zody M.C."/>
            <person name="Goldstein S."/>
            <person name="She X."/>
            <person name="Bult C.J."/>
            <person name="Agarwala R."/>
            <person name="Cherry J.L."/>
            <person name="DiCuccio M."/>
            <person name="Hlavina W."/>
            <person name="Kapustin Y."/>
            <person name="Meric P."/>
            <person name="Maglott D."/>
            <person name="Birtle Z."/>
            <person name="Marques A.C."/>
            <person name="Graves T."/>
            <person name="Zhou S."/>
            <person name="Teague B."/>
            <person name="Potamousis K."/>
            <person name="Churas C."/>
            <person name="Place M."/>
            <person name="Herschleb J."/>
            <person name="Runnheim R."/>
            <person name="Forrest D."/>
            <person name="Amos-Landgraf J."/>
            <person name="Schwartz D.C."/>
            <person name="Cheng Z."/>
            <person name="Lindblad-Toh K."/>
            <person name="Eichler E.E."/>
            <person name="Ponting C.P."/>
        </authorList>
    </citation>
    <scope>NUCLEOTIDE SEQUENCE [LARGE SCALE GENOMIC DNA]</scope>
    <source>
        <strain>C57BL/6J</strain>
    </source>
</reference>
<reference key="4">
    <citation type="submission" date="2005-07" db="EMBL/GenBank/DDBJ databases">
        <authorList>
            <person name="Mural R.J."/>
            <person name="Adams M.D."/>
            <person name="Myers E.W."/>
            <person name="Smith H.O."/>
            <person name="Venter J.C."/>
        </authorList>
    </citation>
    <scope>NUCLEOTIDE SEQUENCE [LARGE SCALE GENOMIC DNA]</scope>
</reference>
<reference key="5">
    <citation type="journal article" date="2004" name="Genome Res.">
        <title>The status, quality, and expansion of the NIH full-length cDNA project: the Mammalian Gene Collection (MGC).</title>
        <authorList>
            <consortium name="The MGC Project Team"/>
        </authorList>
    </citation>
    <scope>NUCLEOTIDE SEQUENCE [LARGE SCALE MRNA]</scope>
</reference>
<reference key="6">
    <citation type="journal article" date="2001" name="J. Biol. Chem.">
        <title>Phosphorylation of RGS9-1 by an endogenous protein kinase in rod outer segments.</title>
        <authorList>
            <person name="Hu G."/>
            <person name="Jang G.F."/>
            <person name="Cowan C.W."/>
            <person name="Wensel T.G."/>
            <person name="Palczewski K."/>
        </authorList>
    </citation>
    <scope>PHOSPHORYLATION OF ISOFORM 1</scope>
</reference>
<reference key="7">
    <citation type="journal article" date="2002" name="Proc. Natl. Acad. Sci. U.S.A.">
        <title>R9AP, a membrane anchor for the photoreceptor GTPase accelerating protein, RGS9-1.</title>
        <authorList>
            <person name="Hu G."/>
            <person name="Wensel T.G."/>
        </authorList>
    </citation>
    <scope>INTERACTION WITH RGS9BP</scope>
    <source>
        <strain>C57BL/6 X 129</strain>
        <tissue>Retina</tissue>
    </source>
</reference>
<reference key="8">
    <citation type="journal article" date="2003" name="J. Biol. Chem.">
        <title>Identification of protein kinase C isozymes responsible for the phosphorylation of photoreceptor-specific RGS9-1 at Ser475.</title>
        <authorList>
            <person name="Sokal I."/>
            <person name="Hu G."/>
            <person name="Liang Y."/>
            <person name="Mao M."/>
            <person name="Wensel T.G."/>
            <person name="Palczewski K."/>
        </authorList>
    </citation>
    <scope>INTERACTION WITH RGS9BP</scope>
</reference>
<reference key="9">
    <citation type="journal article" date="2003" name="J. Neurosci.">
        <title>The DEP domain determines subcellular targeting of the GTPase activating protein RGS9 in vivo.</title>
        <authorList>
            <person name="Martemyanov K.A."/>
            <person name="Lishko P.V."/>
            <person name="Calero N."/>
            <person name="Keresztes G."/>
            <person name="Sokolov M."/>
            <person name="Strissel K.J."/>
            <person name="Leskov I.B."/>
            <person name="Hopp J.A."/>
            <person name="Kolesnikov A.V."/>
            <person name="Chen C.-K."/>
            <person name="Lem J."/>
            <person name="Heller S."/>
            <person name="Burns M.E."/>
            <person name="Arshavsky V.Y."/>
        </authorList>
    </citation>
    <scope>INTERACTION WITH RGS9BP</scope>
</reference>
<reference key="10">
    <citation type="journal article" date="2005" name="J. Biol. Chem.">
        <title>R7BP, a novel neuronal protein interacting with RGS proteins of the R7 family.</title>
        <authorList>
            <person name="Martemyanov K.A."/>
            <person name="Yoo P.J."/>
            <person name="Skiba N.P."/>
            <person name="Arshavsky V.Y."/>
        </authorList>
    </citation>
    <scope>INTERACTION WITH RGS7BP</scope>
</reference>
<reference key="11">
    <citation type="journal article" date="2005" name="J. Cell Biol.">
        <title>Palmitoylation regulates plasma membrane-nuclear shuttling of R7BP, a novel membrane anchor for the RGS7 family.</title>
        <authorList>
            <person name="Drenan R.M."/>
            <person name="Doupnik C.A."/>
            <person name="Boyle M.P."/>
            <person name="Muglia L.J."/>
            <person name="Huettner J.E."/>
            <person name="Linder M.E."/>
            <person name="Blumer K.J."/>
        </authorList>
    </citation>
    <scope>INTERACTION WITH RGS7BP</scope>
</reference>
<reference key="12">
    <citation type="journal article" date="2006" name="Neuron">
        <title>RGS expression rate-limits recovery of rod photoresponses.</title>
        <authorList>
            <person name="Krispel C.M."/>
            <person name="Chen D."/>
            <person name="Melling N."/>
            <person name="Chen Y.-J."/>
            <person name="Martemyanov K.A."/>
            <person name="Quillinan N."/>
            <person name="Arshavsky V.Y."/>
            <person name="Wensel T.G."/>
            <person name="Chen C.-K."/>
            <person name="Burns M.E."/>
        </authorList>
    </citation>
    <scope>INTERACTION WITH RGS9BP</scope>
</reference>
<feature type="chain" id="PRO_0000204204" description="Regulator of G-protein signaling 9">
    <location>
        <begin position="1"/>
        <end position="675"/>
    </location>
</feature>
<feature type="domain" description="DEP" evidence="2">
    <location>
        <begin position="30"/>
        <end position="105"/>
    </location>
</feature>
<feature type="domain" description="G protein gamma">
    <location>
        <begin position="222"/>
        <end position="283"/>
    </location>
</feature>
<feature type="domain" description="RGS" evidence="3">
    <location>
        <begin position="299"/>
        <end position="414"/>
    </location>
</feature>
<feature type="region of interest" description="Disordered" evidence="4">
    <location>
        <begin position="524"/>
        <end position="571"/>
    </location>
</feature>
<feature type="region of interest" description="Disordered" evidence="4">
    <location>
        <begin position="637"/>
        <end position="662"/>
    </location>
</feature>
<feature type="compositionally biased region" description="Polar residues" evidence="4">
    <location>
        <begin position="542"/>
        <end position="551"/>
    </location>
</feature>
<feature type="compositionally biased region" description="Basic and acidic residues" evidence="4">
    <location>
        <begin position="552"/>
        <end position="562"/>
    </location>
</feature>
<feature type="compositionally biased region" description="Basic and acidic residues" evidence="4">
    <location>
        <begin position="646"/>
        <end position="662"/>
    </location>
</feature>
<feature type="splice variant" id="VSP_005678" description="In isoform 1." evidence="6">
    <original>PGQHLAPSPHLAVYTGTC</original>
    <variation>VMSKLDRRSQLKKELPPK</variation>
    <location>
        <begin position="467"/>
        <end position="484"/>
    </location>
</feature>
<feature type="splice variant" id="VSP_005679" description="In isoform 1." evidence="6">
    <location>
        <begin position="485"/>
        <end position="675"/>
    </location>
</feature>
<feature type="sequence conflict" description="In Ref. 1; AAC99481 and 2; AAD20014." evidence="7" ref="1 2">
    <original>F</original>
    <variation>L</variation>
    <location>
        <position position="76"/>
    </location>
</feature>
<feature type="sequence conflict" description="In Ref. 1; AAC99481 and 2; AAD20014." evidence="7" ref="1 2">
    <original>Q</original>
    <variation>R</variation>
    <location>
        <position position="161"/>
    </location>
</feature>
<feature type="helix" evidence="14">
    <location>
        <begin position="16"/>
        <end position="27"/>
    </location>
</feature>
<feature type="turn" evidence="14">
    <location>
        <begin position="30"/>
        <end position="32"/>
    </location>
</feature>
<feature type="helix" evidence="14">
    <location>
        <begin position="52"/>
        <end position="63"/>
    </location>
</feature>
<feature type="helix" evidence="14">
    <location>
        <begin position="67"/>
        <end position="79"/>
    </location>
</feature>
<feature type="strand" evidence="14">
    <location>
        <begin position="82"/>
        <end position="88"/>
    </location>
</feature>
<feature type="strand" evidence="14">
    <location>
        <begin position="96"/>
        <end position="98"/>
    </location>
</feature>
<feature type="strand" evidence="14">
    <location>
        <begin position="100"/>
        <end position="103"/>
    </location>
</feature>
<feature type="helix" evidence="14">
    <location>
        <begin position="106"/>
        <end position="108"/>
    </location>
</feature>
<feature type="helix" evidence="14">
    <location>
        <begin position="118"/>
        <end position="130"/>
    </location>
</feature>
<feature type="strand" evidence="14">
    <location>
        <begin position="132"/>
        <end position="134"/>
    </location>
</feature>
<feature type="helix" evidence="14">
    <location>
        <begin position="138"/>
        <end position="150"/>
    </location>
</feature>
<feature type="helix" evidence="14">
    <location>
        <begin position="152"/>
        <end position="154"/>
    </location>
</feature>
<feature type="helix" evidence="14">
    <location>
        <begin position="155"/>
        <end position="169"/>
    </location>
</feature>
<feature type="helix" evidence="14">
    <location>
        <begin position="174"/>
        <end position="191"/>
    </location>
</feature>
<feature type="strand" evidence="14">
    <location>
        <begin position="207"/>
        <end position="209"/>
    </location>
</feature>
<feature type="helix" evidence="14">
    <location>
        <begin position="219"/>
        <end position="234"/>
    </location>
</feature>
<feature type="helix" evidence="14">
    <location>
        <begin position="240"/>
        <end position="254"/>
    </location>
</feature>
<feature type="helix" evidence="14">
    <location>
        <begin position="255"/>
        <end position="257"/>
    </location>
</feature>
<feature type="helix" evidence="14">
    <location>
        <begin position="259"/>
        <end position="262"/>
    </location>
</feature>
<feature type="helix" evidence="14">
    <location>
        <begin position="269"/>
        <end position="272"/>
    </location>
</feature>
<feature type="helix" evidence="14">
    <location>
        <begin position="276"/>
        <end position="280"/>
    </location>
</feature>
<feature type="helix" evidence="14">
    <location>
        <begin position="290"/>
        <end position="295"/>
    </location>
</feature>
<feature type="turn" evidence="14">
    <location>
        <begin position="296"/>
        <end position="298"/>
    </location>
</feature>
<feature type="helix" evidence="14">
    <location>
        <begin position="300"/>
        <end position="305"/>
    </location>
</feature>
<feature type="helix" evidence="14">
    <location>
        <begin position="307"/>
        <end position="319"/>
    </location>
</feature>
<feature type="helix" evidence="14">
    <location>
        <begin position="325"/>
        <end position="337"/>
    </location>
</feature>
<feature type="strand" evidence="14">
    <location>
        <begin position="340"/>
        <end position="342"/>
    </location>
</feature>
<feature type="helix" evidence="14">
    <location>
        <begin position="343"/>
        <end position="354"/>
    </location>
</feature>
<feature type="helix" evidence="14">
    <location>
        <begin position="367"/>
        <end position="376"/>
    </location>
</feature>
<feature type="turn" evidence="14">
    <location>
        <begin position="382"/>
        <end position="385"/>
    </location>
</feature>
<feature type="helix" evidence="14">
    <location>
        <begin position="386"/>
        <end position="398"/>
    </location>
</feature>
<feature type="helix" evidence="14">
    <location>
        <begin position="400"/>
        <end position="405"/>
    </location>
</feature>
<feature type="helix" evidence="14">
    <location>
        <begin position="408"/>
        <end position="416"/>
    </location>
</feature>
<protein>
    <recommendedName>
        <fullName>Regulator of G-protein signaling 9</fullName>
        <shortName>RGS9</shortName>
    </recommendedName>
</protein>
<comment type="function">
    <text>Inhibits signal transduction by increasing the GTPase activity of G protein alpha subunits thereby driving them into their inactive GDP-bound form. Binds to GNAT1. Involved in phototransduction; key element in the recovery phase of visual transduction.</text>
</comment>
<comment type="subunit">
    <text evidence="1 8 9 10 11 12 13">Heterodimer with GNB5. Interacts with RGS7BP, leading to regulate the subcellular location of the heterodimer formed with GNB5 (PubMed:15632198, PubMed:15897264). Component of the RGS9-1-Gbeta5 complex composed of RGS9 (RGS9-1), Gbeta5 (GNB5) and RGS9BP (PubMed:12119397, PubMed:12499365, PubMed:14614075, PubMed:16908407). Interacts with PDE6G and GNAT1 (By similarity).</text>
</comment>
<comment type="subcellular location">
    <molecule>Isoform 1</molecule>
    <subcellularLocation>
        <location>Membrane</location>
        <topology>Peripheral membrane protein</topology>
    </subcellularLocation>
    <text>Isoform 1 is targeted to the membrane via its interaction with RGS9BP.</text>
</comment>
<comment type="alternative products">
    <event type="alternative splicing"/>
    <isoform>
        <id>O54828-1</id>
        <name>2</name>
        <name>RGS9-2</name>
        <sequence type="displayed"/>
    </isoform>
    <isoform>
        <id>O54828-2</id>
        <name>1</name>
        <name>RGS9-1</name>
        <sequence type="described" ref="VSP_005678 VSP_005679"/>
    </isoform>
</comment>
<comment type="tissue specificity">
    <text>Isoform 1 is expressed in photoreceptor outer segments. Isoform 2 is expressed in brain striatum.</text>
</comment>
<comment type="PTM">
    <text evidence="5">Retinal isoform 1 is light-dependent phosphorylated at 'Ser-475'. Phosphorylation is decreased by light exposition. Interaction with RGS9BP is decreased when isoform 1 is phosphorylated at 'Ser-475'.</text>
</comment>
<sequence>MTIRHQGQQYRPRMAFLQKIEALVKDMQNPETGVRMHNQRVLVTSVPHAMTGGDVLQWITQRLWISNLEAQNLGNFIVKYGYIYPLQDPKNLILKPDSSLYRFQTPYFWPTQQWPAEDTDYAIYLAKRNIKKKGILEEYEKENYDFLNKKINYKWDFVIMQAKEQYRTGKERNKADRYALDCQEKAYWLVHRSPPGMNNVLDYGLDRVTNPNEVKKQTVTAVRKEIMYYQQALMRSTVKSSVSLGGIVKYSEQFSSNDAIMSGCLPSNPWITDDTQFWDLNAKLVEIPTKMRVERWAFNFSELIRDPKGRQSFQYFLKKEFSGENLGFWEACEDLKYGDQSKVKEKAEEIYKLFLAPGARRWINIDGKTMDITVKGLRHPHRYVLDAAQTHIYMLMKKDSYARYLKSPIYKEMLAKAIEPQETTKRSSTLPFMRRHLRSSPSPVILRQLEEEEKAREAANTVDITQPGQHLAPSPHLAVYTGTCVPPSPSSPFSPSCRSPRKPFASPSRFIRRPSIAICPSPSRVALEGSSGLEPKGEASWSGANSGPSVTENREPSADHSRPQPRAPPKARAALSLGRFLRRGCLASPVFARLSPKCPSVSHGKVQPLGDMGQQLPRLKPKKVANFFQIKMEMPTDSGTCLMDSDDPRAGESGDQTTEKEVICPWESLAEGKAG</sequence>
<keyword id="KW-0002">3D-structure</keyword>
<keyword id="KW-0025">Alternative splicing</keyword>
<keyword id="KW-0472">Membrane</keyword>
<keyword id="KW-0597">Phosphoprotein</keyword>
<keyword id="KW-1185">Reference proteome</keyword>
<keyword id="KW-0716">Sensory transduction</keyword>
<keyword id="KW-0734">Signal transduction inhibitor</keyword>
<keyword id="KW-0844">Vision</keyword>
<evidence type="ECO:0000250" key="1">
    <source>
        <dbReference type="UniProtKB" id="O46469"/>
    </source>
</evidence>
<evidence type="ECO:0000255" key="2">
    <source>
        <dbReference type="PROSITE-ProRule" id="PRU00066"/>
    </source>
</evidence>
<evidence type="ECO:0000255" key="3">
    <source>
        <dbReference type="PROSITE-ProRule" id="PRU00171"/>
    </source>
</evidence>
<evidence type="ECO:0000256" key="4">
    <source>
        <dbReference type="SAM" id="MobiDB-lite"/>
    </source>
</evidence>
<evidence type="ECO:0000269" key="5">
    <source>
    </source>
</evidence>
<evidence type="ECO:0000303" key="6">
    <source>
    </source>
</evidence>
<evidence type="ECO:0000305" key="7"/>
<evidence type="ECO:0000305" key="8">
    <source>
    </source>
</evidence>
<evidence type="ECO:0000305" key="9">
    <source>
    </source>
</evidence>
<evidence type="ECO:0000305" key="10">
    <source>
    </source>
</evidence>
<evidence type="ECO:0000305" key="11">
    <source>
    </source>
</evidence>
<evidence type="ECO:0000305" key="12">
    <source>
    </source>
</evidence>
<evidence type="ECO:0000305" key="13">
    <source>
    </source>
</evidence>
<evidence type="ECO:0007829" key="14">
    <source>
        <dbReference type="PDB" id="2PBI"/>
    </source>
</evidence>
<organism>
    <name type="scientific">Mus musculus</name>
    <name type="common">Mouse</name>
    <dbReference type="NCBI Taxonomy" id="10090"/>
    <lineage>
        <taxon>Eukaryota</taxon>
        <taxon>Metazoa</taxon>
        <taxon>Chordata</taxon>
        <taxon>Craniata</taxon>
        <taxon>Vertebrata</taxon>
        <taxon>Euteleostomi</taxon>
        <taxon>Mammalia</taxon>
        <taxon>Eutheria</taxon>
        <taxon>Euarchontoglires</taxon>
        <taxon>Glires</taxon>
        <taxon>Rodentia</taxon>
        <taxon>Myomorpha</taxon>
        <taxon>Muroidea</taxon>
        <taxon>Muridae</taxon>
        <taxon>Murinae</taxon>
        <taxon>Mus</taxon>
        <taxon>Mus</taxon>
    </lineage>
</organism>
<name>RGS9_MOUSE</name>
<proteinExistence type="evidence at protein level"/>
<accession>O54828</accession>
<accession>A1L352</accession>
<accession>Q9Z0S0</accession>
<dbReference type="EMBL" id="AF011358">
    <property type="protein sequence ID" value="AAC99481.1"/>
    <property type="molecule type" value="mRNA"/>
</dbReference>
<dbReference type="EMBL" id="AF125046">
    <property type="protein sequence ID" value="AAD20014.1"/>
    <property type="molecule type" value="mRNA"/>
</dbReference>
<dbReference type="EMBL" id="AL604043">
    <property type="status" value="NOT_ANNOTATED_CDS"/>
    <property type="molecule type" value="Genomic_DNA"/>
</dbReference>
<dbReference type="EMBL" id="CH466558">
    <property type="protein sequence ID" value="EDL34351.1"/>
    <property type="molecule type" value="Genomic_DNA"/>
</dbReference>
<dbReference type="EMBL" id="BC129899">
    <property type="protein sequence ID" value="AAI29900.1"/>
    <property type="molecule type" value="mRNA"/>
</dbReference>
<dbReference type="CCDS" id="CCDS25576.1">
    <molecule id="O54828-1"/>
</dbReference>
<dbReference type="CCDS" id="CCDS48969.1">
    <molecule id="O54828-2"/>
</dbReference>
<dbReference type="RefSeq" id="NP_001159406.1">
    <molecule id="O54828-2"/>
    <property type="nucleotide sequence ID" value="NM_001165934.1"/>
</dbReference>
<dbReference type="RefSeq" id="NP_035398.2">
    <molecule id="O54828-1"/>
    <property type="nucleotide sequence ID" value="NM_011268.2"/>
</dbReference>
<dbReference type="PDB" id="2PBI">
    <property type="method" value="X-ray"/>
    <property type="resolution" value="1.95 A"/>
    <property type="chains" value="A/C=1-422"/>
</dbReference>
<dbReference type="PDBsum" id="2PBI"/>
<dbReference type="SMR" id="O54828"/>
<dbReference type="BioGRID" id="202886">
    <property type="interactions" value="5"/>
</dbReference>
<dbReference type="CORUM" id="O54828"/>
<dbReference type="DIP" id="DIP-46389N"/>
<dbReference type="FunCoup" id="O54828">
    <property type="interactions" value="776"/>
</dbReference>
<dbReference type="IntAct" id="O54828">
    <property type="interactions" value="5"/>
</dbReference>
<dbReference type="STRING" id="10090.ENSMUSP00000020920"/>
<dbReference type="GlyGen" id="O54828">
    <property type="glycosylation" value="1 site, 1 O-linked glycan (1 site)"/>
</dbReference>
<dbReference type="iPTMnet" id="O54828"/>
<dbReference type="PhosphoSitePlus" id="O54828"/>
<dbReference type="SwissPalm" id="O54828"/>
<dbReference type="PaxDb" id="10090-ENSMUSP00000020920"/>
<dbReference type="ProteomicsDB" id="255196">
    <molecule id="O54828-1"/>
</dbReference>
<dbReference type="ProteomicsDB" id="255197">
    <molecule id="O54828-2"/>
</dbReference>
<dbReference type="Antibodypedia" id="9570">
    <property type="antibodies" value="170 antibodies from 28 providers"/>
</dbReference>
<dbReference type="DNASU" id="19739"/>
<dbReference type="Ensembl" id="ENSMUST00000020920.10">
    <molecule id="O54828-1"/>
    <property type="protein sequence ID" value="ENSMUSP00000020920.4"/>
    <property type="gene ID" value="ENSMUSG00000020599.14"/>
</dbReference>
<dbReference type="Ensembl" id="ENSMUST00000106706.8">
    <molecule id="O54828-2"/>
    <property type="protein sequence ID" value="ENSMUSP00000102317.2"/>
    <property type="gene ID" value="ENSMUSG00000020599.14"/>
</dbReference>
<dbReference type="GeneID" id="19739"/>
<dbReference type="KEGG" id="mmu:19739"/>
<dbReference type="UCSC" id="uc007mbx.1">
    <molecule id="O54828-1"/>
    <property type="organism name" value="mouse"/>
</dbReference>
<dbReference type="AGR" id="MGI:1338824"/>
<dbReference type="CTD" id="8787"/>
<dbReference type="MGI" id="MGI:1338824">
    <property type="gene designation" value="Rgs9"/>
</dbReference>
<dbReference type="VEuPathDB" id="HostDB:ENSMUSG00000020599"/>
<dbReference type="eggNOG" id="KOG3589">
    <property type="taxonomic scope" value="Eukaryota"/>
</dbReference>
<dbReference type="GeneTree" id="ENSGT00940000156505"/>
<dbReference type="HOGENOM" id="CLU_025092_5_0_1"/>
<dbReference type="InParanoid" id="O54828"/>
<dbReference type="OMA" id="PRMACLR"/>
<dbReference type="OrthoDB" id="196547at2759"/>
<dbReference type="PhylomeDB" id="O54828"/>
<dbReference type="TreeFam" id="TF351956"/>
<dbReference type="Reactome" id="R-MMU-2514859">
    <property type="pathway name" value="Inactivation, recovery and regulation of the phototransduction cascade"/>
</dbReference>
<dbReference type="Reactome" id="R-MMU-418594">
    <property type="pathway name" value="G alpha (i) signalling events"/>
</dbReference>
<dbReference type="Reactome" id="R-MMU-6814122">
    <property type="pathway name" value="Cooperation of PDCL (PhLP1) and TRiC/CCT in G-protein beta folding"/>
</dbReference>
<dbReference type="BioGRID-ORCS" id="19739">
    <property type="hits" value="5 hits in 80 CRISPR screens"/>
</dbReference>
<dbReference type="CD-CODE" id="CE726F99">
    <property type="entry name" value="Postsynaptic density"/>
</dbReference>
<dbReference type="ChiTaRS" id="Rgs9">
    <property type="organism name" value="mouse"/>
</dbReference>
<dbReference type="EvolutionaryTrace" id="O54828"/>
<dbReference type="PRO" id="PR:O54828"/>
<dbReference type="Proteomes" id="UP000000589">
    <property type="component" value="Chromosome 11"/>
</dbReference>
<dbReference type="RNAct" id="O54828">
    <property type="molecule type" value="protein"/>
</dbReference>
<dbReference type="Bgee" id="ENSMUSG00000020599">
    <property type="expression patterns" value="Expressed in retinal neural layer and 111 other cell types or tissues"/>
</dbReference>
<dbReference type="ExpressionAtlas" id="O54828">
    <property type="expression patterns" value="baseline and differential"/>
</dbReference>
<dbReference type="GO" id="GO:0098978">
    <property type="term" value="C:glutamatergic synapse"/>
    <property type="evidence" value="ECO:0000314"/>
    <property type="project" value="SynGO"/>
</dbReference>
<dbReference type="GO" id="GO:0001917">
    <property type="term" value="C:photoreceptor inner segment"/>
    <property type="evidence" value="ECO:0000314"/>
    <property type="project" value="MGI"/>
</dbReference>
<dbReference type="GO" id="GO:0098839">
    <property type="term" value="C:postsynaptic density membrane"/>
    <property type="evidence" value="ECO:0000314"/>
    <property type="project" value="SynGO"/>
</dbReference>
<dbReference type="GO" id="GO:0042734">
    <property type="term" value="C:presynaptic membrane"/>
    <property type="evidence" value="ECO:0000314"/>
    <property type="project" value="SynGO"/>
</dbReference>
<dbReference type="GO" id="GO:0120200">
    <property type="term" value="C:rod photoreceptor outer segment"/>
    <property type="evidence" value="ECO:0000314"/>
    <property type="project" value="MGI"/>
</dbReference>
<dbReference type="GO" id="GO:0005096">
    <property type="term" value="F:GTPase activator activity"/>
    <property type="evidence" value="ECO:0000304"/>
    <property type="project" value="MGI"/>
</dbReference>
<dbReference type="GO" id="GO:1990603">
    <property type="term" value="P:dark adaptation"/>
    <property type="evidence" value="ECO:0000314"/>
    <property type="project" value="MGI"/>
</dbReference>
<dbReference type="GO" id="GO:0007212">
    <property type="term" value="P:G protein-coupled dopamine receptor signaling pathway"/>
    <property type="evidence" value="ECO:0007669"/>
    <property type="project" value="Ensembl"/>
</dbReference>
<dbReference type="GO" id="GO:0007186">
    <property type="term" value="P:G protein-coupled receptor signaling pathway"/>
    <property type="evidence" value="ECO:0000304"/>
    <property type="project" value="MGI"/>
</dbReference>
<dbReference type="GO" id="GO:0035556">
    <property type="term" value="P:intracellular signal transduction"/>
    <property type="evidence" value="ECO:0007669"/>
    <property type="project" value="InterPro"/>
</dbReference>
<dbReference type="GO" id="GO:0036367">
    <property type="term" value="P:light adaption"/>
    <property type="evidence" value="ECO:0000314"/>
    <property type="project" value="MGI"/>
</dbReference>
<dbReference type="GO" id="GO:0009968">
    <property type="term" value="P:negative regulation of signal transduction"/>
    <property type="evidence" value="ECO:0007669"/>
    <property type="project" value="UniProtKB-KW"/>
</dbReference>
<dbReference type="GO" id="GO:0007399">
    <property type="term" value="P:nervous system development"/>
    <property type="evidence" value="ECO:0007669"/>
    <property type="project" value="Ensembl"/>
</dbReference>
<dbReference type="GO" id="GO:1905912">
    <property type="term" value="P:regulation of calcium ion export across plasma membrane"/>
    <property type="evidence" value="ECO:0007669"/>
    <property type="project" value="Ensembl"/>
</dbReference>
<dbReference type="GO" id="GO:0008277">
    <property type="term" value="P:regulation of G protein-coupled receptor signaling pathway"/>
    <property type="evidence" value="ECO:0007669"/>
    <property type="project" value="Ensembl"/>
</dbReference>
<dbReference type="GO" id="GO:0001975">
    <property type="term" value="P:response to amphetamine"/>
    <property type="evidence" value="ECO:0007669"/>
    <property type="project" value="Ensembl"/>
</dbReference>
<dbReference type="GO" id="GO:0032355">
    <property type="term" value="P:response to estradiol"/>
    <property type="evidence" value="ECO:0007669"/>
    <property type="project" value="Ensembl"/>
</dbReference>
<dbReference type="GO" id="GO:0007601">
    <property type="term" value="P:visual perception"/>
    <property type="evidence" value="ECO:0007669"/>
    <property type="project" value="UniProtKB-KW"/>
</dbReference>
<dbReference type="CDD" id="cd04450">
    <property type="entry name" value="DEP_RGS7-like"/>
    <property type="match status" value="1"/>
</dbReference>
<dbReference type="CDD" id="cd00068">
    <property type="entry name" value="GGL"/>
    <property type="match status" value="1"/>
</dbReference>
<dbReference type="CDD" id="cd08739">
    <property type="entry name" value="RGS_RGS9"/>
    <property type="match status" value="1"/>
</dbReference>
<dbReference type="FunFam" id="1.10.1240.60:FF:000001">
    <property type="entry name" value="Regulator of G-protein signaling 6"/>
    <property type="match status" value="1"/>
</dbReference>
<dbReference type="FunFam" id="1.10.167.10:FF:000002">
    <property type="entry name" value="Regulator of G-protein signaling 6 isoform 9"/>
    <property type="match status" value="1"/>
</dbReference>
<dbReference type="FunFam" id="1.10.10.10:FF:000329">
    <property type="entry name" value="regulator of G-protein signaling 9 isoform X2"/>
    <property type="match status" value="1"/>
</dbReference>
<dbReference type="Gene3D" id="1.10.1240.60">
    <property type="match status" value="1"/>
</dbReference>
<dbReference type="Gene3D" id="1.10.167.10">
    <property type="entry name" value="Regulator of G-protein Signalling 4, domain 2"/>
    <property type="match status" value="1"/>
</dbReference>
<dbReference type="Gene3D" id="4.10.260.10">
    <property type="entry name" value="Transducin (heterotrimeric G protein), gamma chain"/>
    <property type="match status" value="1"/>
</dbReference>
<dbReference type="Gene3D" id="1.10.10.10">
    <property type="entry name" value="Winged helix-like DNA-binding domain superfamily/Winged helix DNA-binding domain"/>
    <property type="match status" value="1"/>
</dbReference>
<dbReference type="InterPro" id="IPR000591">
    <property type="entry name" value="DEP_dom"/>
</dbReference>
<dbReference type="InterPro" id="IPR015898">
    <property type="entry name" value="G-protein_gamma-like_dom"/>
</dbReference>
<dbReference type="InterPro" id="IPR036284">
    <property type="entry name" value="GGL_sf"/>
</dbReference>
<dbReference type="InterPro" id="IPR016137">
    <property type="entry name" value="RGS"/>
</dbReference>
<dbReference type="InterPro" id="IPR047016">
    <property type="entry name" value="RGS6/7/9/11"/>
</dbReference>
<dbReference type="InterPro" id="IPR047017">
    <property type="entry name" value="RGS6/7/9/11_DHEX_sf"/>
</dbReference>
<dbReference type="InterPro" id="IPR047077">
    <property type="entry name" value="RGS9_RGS"/>
</dbReference>
<dbReference type="InterPro" id="IPR040759">
    <property type="entry name" value="RGS_DHEX"/>
</dbReference>
<dbReference type="InterPro" id="IPR036305">
    <property type="entry name" value="RGS_sf"/>
</dbReference>
<dbReference type="InterPro" id="IPR044926">
    <property type="entry name" value="RGS_subdomain_2"/>
</dbReference>
<dbReference type="InterPro" id="IPR036388">
    <property type="entry name" value="WH-like_DNA-bd_sf"/>
</dbReference>
<dbReference type="InterPro" id="IPR036390">
    <property type="entry name" value="WH_DNA-bd_sf"/>
</dbReference>
<dbReference type="PANTHER" id="PTHR45746">
    <property type="entry name" value="LP21163P"/>
    <property type="match status" value="1"/>
</dbReference>
<dbReference type="PANTHER" id="PTHR45746:SF1">
    <property type="entry name" value="REGULATOR OF G-PROTEIN SIGNALING 9"/>
    <property type="match status" value="1"/>
</dbReference>
<dbReference type="Pfam" id="PF00610">
    <property type="entry name" value="DEP"/>
    <property type="match status" value="1"/>
</dbReference>
<dbReference type="Pfam" id="PF00631">
    <property type="entry name" value="G-gamma"/>
    <property type="match status" value="1"/>
</dbReference>
<dbReference type="Pfam" id="PF00615">
    <property type="entry name" value="RGS"/>
    <property type="match status" value="1"/>
</dbReference>
<dbReference type="Pfam" id="PF18148">
    <property type="entry name" value="RGS_DHEX"/>
    <property type="match status" value="1"/>
</dbReference>
<dbReference type="PRINTS" id="PR01301">
    <property type="entry name" value="RGSPROTEIN"/>
</dbReference>
<dbReference type="SMART" id="SM00049">
    <property type="entry name" value="DEP"/>
    <property type="match status" value="1"/>
</dbReference>
<dbReference type="SMART" id="SM01224">
    <property type="entry name" value="G_gamma"/>
    <property type="match status" value="1"/>
</dbReference>
<dbReference type="SMART" id="SM00224">
    <property type="entry name" value="GGL"/>
    <property type="match status" value="1"/>
</dbReference>
<dbReference type="SMART" id="SM00315">
    <property type="entry name" value="RGS"/>
    <property type="match status" value="1"/>
</dbReference>
<dbReference type="SUPFAM" id="SSF48097">
    <property type="entry name" value="Regulator of G-protein signaling, RGS"/>
    <property type="match status" value="1"/>
</dbReference>
<dbReference type="SUPFAM" id="SSF48670">
    <property type="entry name" value="Transducin (heterotrimeric G protein), gamma chain"/>
    <property type="match status" value="1"/>
</dbReference>
<dbReference type="SUPFAM" id="SSF46785">
    <property type="entry name" value="Winged helix' DNA-binding domain"/>
    <property type="match status" value="1"/>
</dbReference>
<dbReference type="PROSITE" id="PS50186">
    <property type="entry name" value="DEP"/>
    <property type="match status" value="1"/>
</dbReference>
<dbReference type="PROSITE" id="PS50132">
    <property type="entry name" value="RGS"/>
    <property type="match status" value="1"/>
</dbReference>